<dbReference type="EMBL" id="AJ567472">
    <property type="protein sequence ID" value="CAD98962.1"/>
    <property type="molecule type" value="Genomic_DNA"/>
</dbReference>
<dbReference type="RefSeq" id="YP_003758.1">
    <property type="nucleotide sequence ID" value="NC_005830.1"/>
</dbReference>
<dbReference type="SMR" id="Q70LB8"/>
<dbReference type="KEGG" id="vg:2769158"/>
<dbReference type="Proteomes" id="UP000000514">
    <property type="component" value="Genome"/>
</dbReference>
<dbReference type="GO" id="GO:0033644">
    <property type="term" value="C:host cell membrane"/>
    <property type="evidence" value="ECO:0007669"/>
    <property type="project" value="UniProtKB-SubCell"/>
</dbReference>
<dbReference type="GO" id="GO:0016020">
    <property type="term" value="C:membrane"/>
    <property type="evidence" value="ECO:0007669"/>
    <property type="project" value="UniProtKB-KW"/>
</dbReference>
<keyword id="KW-1043">Host membrane</keyword>
<keyword id="KW-0472">Membrane</keyword>
<keyword id="KW-1185">Reference proteome</keyword>
<keyword id="KW-0812">Transmembrane</keyword>
<keyword id="KW-1133">Transmembrane helix</keyword>
<evidence type="ECO:0000255" key="1"/>
<evidence type="ECO:0000305" key="2"/>
<reference key="1">
    <citation type="journal article" date="2003" name="Virology">
        <title>AFV1, a novel virus infecting hyperthermophilic archaea of the genus acidianus.</title>
        <authorList>
            <person name="Bettstetter M."/>
            <person name="Peng X."/>
            <person name="Garrett R.A."/>
            <person name="Prangishvili D."/>
        </authorList>
    </citation>
    <scope>NUCLEOTIDE SEQUENCE [GENOMIC DNA]</scope>
</reference>
<organism>
    <name type="scientific">Acidianus filamentous virus 1 (isolate United States/Yellowstone)</name>
    <name type="common">AFV-1</name>
    <dbReference type="NCBI Taxonomy" id="654909"/>
    <lineage>
        <taxon>Viruses</taxon>
        <taxon>Adnaviria</taxon>
        <taxon>Zilligvirae</taxon>
        <taxon>Taleaviricota</taxon>
        <taxon>Tokiviricetes</taxon>
        <taxon>Ligamenvirales</taxon>
        <taxon>Ungulaviridae</taxon>
        <taxon>Captovirus</taxon>
        <taxon>Acidianus filamentous virus 1</taxon>
    </lineage>
</organism>
<gene>
    <name type="ORF">ORF52</name>
</gene>
<feature type="chain" id="PRO_0000384538" description="Transmembrane protein ORF52">
    <location>
        <begin position="1"/>
        <end position="52"/>
    </location>
</feature>
<feature type="transmembrane region" description="Helical" evidence="1">
    <location>
        <begin position="11"/>
        <end position="31"/>
    </location>
</feature>
<feature type="transmembrane region" description="Helical" evidence="1">
    <location>
        <begin position="32"/>
        <end position="52"/>
    </location>
</feature>
<sequence>MSSTANAIADAFLGVLNALAPIIEGATEIITFMALTYVMTMVIARILGGLFV</sequence>
<comment type="subcellular location">
    <subcellularLocation>
        <location evidence="2">Host membrane</location>
        <topology evidence="2">Multi-pass membrane protein</topology>
    </subcellularLocation>
</comment>
<name>Y052_AFV1Y</name>
<proteinExistence type="predicted"/>
<organismHost>
    <name type="scientific">Acidianus hospitalis</name>
    <dbReference type="NCBI Taxonomy" id="563177"/>
</organismHost>
<organismHost>
    <name type="scientific">Acidianus infernus</name>
    <dbReference type="NCBI Taxonomy" id="12915"/>
</organismHost>
<protein>
    <recommendedName>
        <fullName>Transmembrane protein ORF52</fullName>
    </recommendedName>
</protein>
<accession>Q70LB8</accession>